<gene>
    <name evidence="1" type="primary">murG</name>
    <name type="ordered locus">BSU15220</name>
</gene>
<comment type="function">
    <text evidence="1">Cell wall formation. Catalyzes the transfer of a GlcNAc subunit on undecaprenyl-pyrophosphoryl-MurNAc-pentapeptide (lipid intermediate I) to form undecaprenyl-pyrophosphoryl-MurNAc-(pentapeptide)GlcNAc (lipid intermediate II).</text>
</comment>
<comment type="catalytic activity">
    <reaction evidence="1">
        <text>di-trans,octa-cis-undecaprenyl diphospho-N-acetyl-alpha-D-muramoyl-L-alanyl-D-glutamyl-meso-2,6-diaminopimeloyl-D-alanyl-D-alanine + UDP-N-acetyl-alpha-D-glucosamine = di-trans,octa-cis-undecaprenyl diphospho-[N-acetyl-alpha-D-glucosaminyl-(1-&gt;4)]-N-acetyl-alpha-D-muramoyl-L-alanyl-D-glutamyl-meso-2,6-diaminopimeloyl-D-alanyl-D-alanine + UDP + H(+)</text>
        <dbReference type="Rhea" id="RHEA:31227"/>
        <dbReference type="ChEBI" id="CHEBI:15378"/>
        <dbReference type="ChEBI" id="CHEBI:57705"/>
        <dbReference type="ChEBI" id="CHEBI:58223"/>
        <dbReference type="ChEBI" id="CHEBI:61387"/>
        <dbReference type="ChEBI" id="CHEBI:61388"/>
        <dbReference type="EC" id="2.4.1.227"/>
    </reaction>
</comment>
<comment type="pathway">
    <text evidence="1">Cell wall biogenesis; peptidoglycan biosynthesis.</text>
</comment>
<comment type="subcellular location">
    <subcellularLocation>
        <location evidence="1">Cell membrane</location>
        <topology evidence="1">Peripheral membrane protein</topology>
        <orientation evidence="1">Cytoplasmic side</orientation>
    </subcellularLocation>
</comment>
<comment type="similarity">
    <text evidence="1">Belongs to the glycosyltransferase 28 family. MurG subfamily.</text>
</comment>
<proteinExistence type="inferred from homology"/>
<sequence length="363" mass="39936">MRIAISGGGTGGHIYPALAFIKEVQRRHPNVEFLYIGTENGLEKKIVERENIPFRSIEITGFKRKLSFENVKTVMRFLKGVKKSKSYLAEFKPDAVIGTGGYVCGPVVYAAAKMGIPTIVHEQNSLPGITNKFLSKYVNKVAICFEEAKSHFPSEKVVFTGNPRASEVVSIKTGRSLAEFGLSEDKKTVLIFGGSRGAAPINRAVIDMQDVLKTRDYQVLYITGEVHYEKVMNELKSKGAADNMVTKPFLHQMPEYLKAIDVIVARAGATTIAEITALGIPSVLIPSPYVTANHQEVNARSLGQHDAAIVLKETELSGEKLIEALDRIVLNEQTLKEMSERTKSLGVPDAAARLYSVLEELKK</sequence>
<name>MURG_BACSU</name>
<keyword id="KW-0131">Cell cycle</keyword>
<keyword id="KW-0132">Cell division</keyword>
<keyword id="KW-1003">Cell membrane</keyword>
<keyword id="KW-0133">Cell shape</keyword>
<keyword id="KW-0961">Cell wall biogenesis/degradation</keyword>
<keyword id="KW-0328">Glycosyltransferase</keyword>
<keyword id="KW-0472">Membrane</keyword>
<keyword id="KW-0573">Peptidoglycan synthesis</keyword>
<keyword id="KW-1185">Reference proteome</keyword>
<keyword id="KW-0808">Transferase</keyword>
<accession>P37585</accession>
<accession>P18578</accession>
<accession>Q59247</accession>
<dbReference type="EC" id="2.4.1.227" evidence="1"/>
<dbReference type="EMBL" id="D10602">
    <property type="protein sequence ID" value="BAA01454.1"/>
    <property type="molecule type" value="Genomic_DNA"/>
</dbReference>
<dbReference type="EMBL" id="X64259">
    <property type="protein sequence ID" value="CAA45558.1"/>
    <property type="molecule type" value="Genomic_DNA"/>
</dbReference>
<dbReference type="EMBL" id="AL009126">
    <property type="protein sequence ID" value="CAB13395.2"/>
    <property type="molecule type" value="Genomic_DNA"/>
</dbReference>
<dbReference type="EMBL" id="M31827">
    <property type="protein sequence ID" value="AAA83968.1"/>
    <property type="molecule type" value="Genomic_DNA"/>
</dbReference>
<dbReference type="PIR" id="S25763">
    <property type="entry name" value="JC1275"/>
</dbReference>
<dbReference type="RefSeq" id="NP_389405.2">
    <property type="nucleotide sequence ID" value="NC_000964.3"/>
</dbReference>
<dbReference type="RefSeq" id="WP_003232184.1">
    <property type="nucleotide sequence ID" value="NZ_OZ025638.1"/>
</dbReference>
<dbReference type="SMR" id="P37585"/>
<dbReference type="FunCoup" id="P37585">
    <property type="interactions" value="401"/>
</dbReference>
<dbReference type="IntAct" id="P37585">
    <property type="interactions" value="1"/>
</dbReference>
<dbReference type="STRING" id="224308.BSU15220"/>
<dbReference type="CAZy" id="GT28">
    <property type="family name" value="Glycosyltransferase Family 28"/>
</dbReference>
<dbReference type="PaxDb" id="224308-BSU15220"/>
<dbReference type="EnsemblBacteria" id="CAB13395">
    <property type="protein sequence ID" value="CAB13395"/>
    <property type="gene ID" value="BSU_15220"/>
</dbReference>
<dbReference type="GeneID" id="935929"/>
<dbReference type="KEGG" id="bsu:BSU15220"/>
<dbReference type="PATRIC" id="fig|224308.179.peg.1660"/>
<dbReference type="eggNOG" id="COG0707">
    <property type="taxonomic scope" value="Bacteria"/>
</dbReference>
<dbReference type="InParanoid" id="P37585"/>
<dbReference type="OrthoDB" id="9808936at2"/>
<dbReference type="PhylomeDB" id="P37585"/>
<dbReference type="BioCyc" id="BSUB:BSU15220-MONOMER"/>
<dbReference type="UniPathway" id="UPA00219"/>
<dbReference type="Proteomes" id="UP000001570">
    <property type="component" value="Chromosome"/>
</dbReference>
<dbReference type="GO" id="GO:0005886">
    <property type="term" value="C:plasma membrane"/>
    <property type="evidence" value="ECO:0007669"/>
    <property type="project" value="UniProtKB-SubCell"/>
</dbReference>
<dbReference type="GO" id="GO:0016757">
    <property type="term" value="F:glycosyltransferase activity"/>
    <property type="evidence" value="ECO:0000318"/>
    <property type="project" value="GO_Central"/>
</dbReference>
<dbReference type="GO" id="GO:0051991">
    <property type="term" value="F:UDP-N-acetyl-D-glucosamine:N-acetylmuramoyl-L-alanyl-D-glutamyl-meso-2,6-diaminopimelyl-D-alanyl-D-alanine-diphosphoundecaprenol 4-beta-N-acetylglucosaminlytransferase activity"/>
    <property type="evidence" value="ECO:0007669"/>
    <property type="project" value="RHEA"/>
</dbReference>
<dbReference type="GO" id="GO:0050511">
    <property type="term" value="F:undecaprenyldiphospho-muramoylpentapeptide beta-N-acetylglucosaminyltransferase activity"/>
    <property type="evidence" value="ECO:0007669"/>
    <property type="project" value="UniProtKB-UniRule"/>
</dbReference>
<dbReference type="GO" id="GO:0005975">
    <property type="term" value="P:carbohydrate metabolic process"/>
    <property type="evidence" value="ECO:0007669"/>
    <property type="project" value="InterPro"/>
</dbReference>
<dbReference type="GO" id="GO:0051301">
    <property type="term" value="P:cell division"/>
    <property type="evidence" value="ECO:0007669"/>
    <property type="project" value="UniProtKB-KW"/>
</dbReference>
<dbReference type="GO" id="GO:0071555">
    <property type="term" value="P:cell wall organization"/>
    <property type="evidence" value="ECO:0007669"/>
    <property type="project" value="UniProtKB-KW"/>
</dbReference>
<dbReference type="GO" id="GO:0030259">
    <property type="term" value="P:lipid glycosylation"/>
    <property type="evidence" value="ECO:0007669"/>
    <property type="project" value="UniProtKB-UniRule"/>
</dbReference>
<dbReference type="GO" id="GO:0009252">
    <property type="term" value="P:peptidoglycan biosynthetic process"/>
    <property type="evidence" value="ECO:0007669"/>
    <property type="project" value="UniProtKB-UniRule"/>
</dbReference>
<dbReference type="GO" id="GO:0008360">
    <property type="term" value="P:regulation of cell shape"/>
    <property type="evidence" value="ECO:0007669"/>
    <property type="project" value="UniProtKB-KW"/>
</dbReference>
<dbReference type="CDD" id="cd03785">
    <property type="entry name" value="GT28_MurG"/>
    <property type="match status" value="1"/>
</dbReference>
<dbReference type="Gene3D" id="3.40.50.2000">
    <property type="entry name" value="Glycogen Phosphorylase B"/>
    <property type="match status" value="2"/>
</dbReference>
<dbReference type="HAMAP" id="MF_00033">
    <property type="entry name" value="MurG"/>
    <property type="match status" value="1"/>
</dbReference>
<dbReference type="InterPro" id="IPR006009">
    <property type="entry name" value="GlcNAc_MurG"/>
</dbReference>
<dbReference type="InterPro" id="IPR007235">
    <property type="entry name" value="Glyco_trans_28_C"/>
</dbReference>
<dbReference type="InterPro" id="IPR004276">
    <property type="entry name" value="GlycoTrans_28_N"/>
</dbReference>
<dbReference type="NCBIfam" id="TIGR01133">
    <property type="entry name" value="murG"/>
    <property type="match status" value="1"/>
</dbReference>
<dbReference type="PANTHER" id="PTHR21015:SF22">
    <property type="entry name" value="GLYCOSYLTRANSFERASE"/>
    <property type="match status" value="1"/>
</dbReference>
<dbReference type="PANTHER" id="PTHR21015">
    <property type="entry name" value="UDP-N-ACETYLGLUCOSAMINE--N-ACETYLMURAMYL-(PENTAPEPTIDE) PYROPHOSPHORYL-UNDECAPRENOL N-ACETYLGLUCOSAMINE TRANSFERASE 1"/>
    <property type="match status" value="1"/>
</dbReference>
<dbReference type="Pfam" id="PF04101">
    <property type="entry name" value="Glyco_tran_28_C"/>
    <property type="match status" value="1"/>
</dbReference>
<dbReference type="Pfam" id="PF03033">
    <property type="entry name" value="Glyco_transf_28"/>
    <property type="match status" value="1"/>
</dbReference>
<dbReference type="SUPFAM" id="SSF53756">
    <property type="entry name" value="UDP-Glycosyltransferase/glycogen phosphorylase"/>
    <property type="match status" value="1"/>
</dbReference>
<reference key="1">
    <citation type="journal article" date="1992" name="Gene">
        <title>Sequence of the Bacillus subtilis homolog of the Escherichia coli cell-division gene murG.</title>
        <authorList>
            <person name="Miyao A."/>
            <person name="Yoshimura A."/>
            <person name="Sato T."/>
            <person name="Yamamoto T."/>
            <person name="Theeragool G."/>
            <person name="Kobayashi Y."/>
        </authorList>
    </citation>
    <scope>NUCLEOTIDE SEQUENCE [GENOMIC DNA]</scope>
</reference>
<reference key="2">
    <citation type="journal article" date="1992" name="Biochimie">
        <title>A Bacillus subtilis morphogene cluster that includes spoVE is homologous to the mra region of Escherichia coli.</title>
        <authorList>
            <person name="Henriques A.O."/>
            <person name="de Lencastre H."/>
            <person name="Piggot P.J."/>
        </authorList>
    </citation>
    <scope>NUCLEOTIDE SEQUENCE [GENOMIC DNA]</scope>
    <source>
        <strain>168</strain>
    </source>
</reference>
<reference key="3">
    <citation type="journal article" date="1997" name="Nature">
        <title>The complete genome sequence of the Gram-positive bacterium Bacillus subtilis.</title>
        <authorList>
            <person name="Kunst F."/>
            <person name="Ogasawara N."/>
            <person name="Moszer I."/>
            <person name="Albertini A.M."/>
            <person name="Alloni G."/>
            <person name="Azevedo V."/>
            <person name="Bertero M.G."/>
            <person name="Bessieres P."/>
            <person name="Bolotin A."/>
            <person name="Borchert S."/>
            <person name="Borriss R."/>
            <person name="Boursier L."/>
            <person name="Brans A."/>
            <person name="Braun M."/>
            <person name="Brignell S.C."/>
            <person name="Bron S."/>
            <person name="Brouillet S."/>
            <person name="Bruschi C.V."/>
            <person name="Caldwell B."/>
            <person name="Capuano V."/>
            <person name="Carter N.M."/>
            <person name="Choi S.-K."/>
            <person name="Codani J.-J."/>
            <person name="Connerton I.F."/>
            <person name="Cummings N.J."/>
            <person name="Daniel R.A."/>
            <person name="Denizot F."/>
            <person name="Devine K.M."/>
            <person name="Duesterhoeft A."/>
            <person name="Ehrlich S.D."/>
            <person name="Emmerson P.T."/>
            <person name="Entian K.-D."/>
            <person name="Errington J."/>
            <person name="Fabret C."/>
            <person name="Ferrari E."/>
            <person name="Foulger D."/>
            <person name="Fritz C."/>
            <person name="Fujita M."/>
            <person name="Fujita Y."/>
            <person name="Fuma S."/>
            <person name="Galizzi A."/>
            <person name="Galleron N."/>
            <person name="Ghim S.-Y."/>
            <person name="Glaser P."/>
            <person name="Goffeau A."/>
            <person name="Golightly E.J."/>
            <person name="Grandi G."/>
            <person name="Guiseppi G."/>
            <person name="Guy B.J."/>
            <person name="Haga K."/>
            <person name="Haiech J."/>
            <person name="Harwood C.R."/>
            <person name="Henaut A."/>
            <person name="Hilbert H."/>
            <person name="Holsappel S."/>
            <person name="Hosono S."/>
            <person name="Hullo M.-F."/>
            <person name="Itaya M."/>
            <person name="Jones L.-M."/>
            <person name="Joris B."/>
            <person name="Karamata D."/>
            <person name="Kasahara Y."/>
            <person name="Klaerr-Blanchard M."/>
            <person name="Klein C."/>
            <person name="Kobayashi Y."/>
            <person name="Koetter P."/>
            <person name="Koningstein G."/>
            <person name="Krogh S."/>
            <person name="Kumano M."/>
            <person name="Kurita K."/>
            <person name="Lapidus A."/>
            <person name="Lardinois S."/>
            <person name="Lauber J."/>
            <person name="Lazarevic V."/>
            <person name="Lee S.-M."/>
            <person name="Levine A."/>
            <person name="Liu H."/>
            <person name="Masuda S."/>
            <person name="Mauel C."/>
            <person name="Medigue C."/>
            <person name="Medina N."/>
            <person name="Mellado R.P."/>
            <person name="Mizuno M."/>
            <person name="Moestl D."/>
            <person name="Nakai S."/>
            <person name="Noback M."/>
            <person name="Noone D."/>
            <person name="O'Reilly M."/>
            <person name="Ogawa K."/>
            <person name="Ogiwara A."/>
            <person name="Oudega B."/>
            <person name="Park S.-H."/>
            <person name="Parro V."/>
            <person name="Pohl T.M."/>
            <person name="Portetelle D."/>
            <person name="Porwollik S."/>
            <person name="Prescott A.M."/>
            <person name="Presecan E."/>
            <person name="Pujic P."/>
            <person name="Purnelle B."/>
            <person name="Rapoport G."/>
            <person name="Rey M."/>
            <person name="Reynolds S."/>
            <person name="Rieger M."/>
            <person name="Rivolta C."/>
            <person name="Rocha E."/>
            <person name="Roche B."/>
            <person name="Rose M."/>
            <person name="Sadaie Y."/>
            <person name="Sato T."/>
            <person name="Scanlan E."/>
            <person name="Schleich S."/>
            <person name="Schroeter R."/>
            <person name="Scoffone F."/>
            <person name="Sekiguchi J."/>
            <person name="Sekowska A."/>
            <person name="Seror S.J."/>
            <person name="Serror P."/>
            <person name="Shin B.-S."/>
            <person name="Soldo B."/>
            <person name="Sorokin A."/>
            <person name="Tacconi E."/>
            <person name="Takagi T."/>
            <person name="Takahashi H."/>
            <person name="Takemaru K."/>
            <person name="Takeuchi M."/>
            <person name="Tamakoshi A."/>
            <person name="Tanaka T."/>
            <person name="Terpstra P."/>
            <person name="Tognoni A."/>
            <person name="Tosato V."/>
            <person name="Uchiyama S."/>
            <person name="Vandenbol M."/>
            <person name="Vannier F."/>
            <person name="Vassarotti A."/>
            <person name="Viari A."/>
            <person name="Wambutt R."/>
            <person name="Wedler E."/>
            <person name="Wedler H."/>
            <person name="Weitzenegger T."/>
            <person name="Winters P."/>
            <person name="Wipat A."/>
            <person name="Yamamoto H."/>
            <person name="Yamane K."/>
            <person name="Yasumoto K."/>
            <person name="Yata K."/>
            <person name="Yoshida K."/>
            <person name="Yoshikawa H.-F."/>
            <person name="Zumstein E."/>
            <person name="Yoshikawa H."/>
            <person name="Danchin A."/>
        </authorList>
    </citation>
    <scope>NUCLEOTIDE SEQUENCE [LARGE SCALE GENOMIC DNA]</scope>
    <source>
        <strain>168</strain>
    </source>
</reference>
<reference key="4">
    <citation type="journal article" date="2009" name="Microbiology">
        <title>From a consortium sequence to a unified sequence: the Bacillus subtilis 168 reference genome a decade later.</title>
        <authorList>
            <person name="Barbe V."/>
            <person name="Cruveiller S."/>
            <person name="Kunst F."/>
            <person name="Lenoble P."/>
            <person name="Meurice G."/>
            <person name="Sekowska A."/>
            <person name="Vallenet D."/>
            <person name="Wang T."/>
            <person name="Moszer I."/>
            <person name="Medigue C."/>
            <person name="Danchin A."/>
        </authorList>
    </citation>
    <scope>SEQUENCE REVISION TO 181 AND 270</scope>
</reference>
<reference key="5">
    <citation type="journal article" date="1989" name="J. Bacteriol.">
        <title>Nucleotide sequence and insertional inactivation of a Bacillus subtilis gene that affects cell division, sporulation, and temperature sensitivity.</title>
        <authorList>
            <person name="Beall B."/>
            <person name="Lutkenhaus J."/>
        </authorList>
    </citation>
    <scope>NUCLEOTIDE SEQUENCE [GENOMIC DNA] OF 216-363</scope>
</reference>
<evidence type="ECO:0000255" key="1">
    <source>
        <dbReference type="HAMAP-Rule" id="MF_00033"/>
    </source>
</evidence>
<evidence type="ECO:0000305" key="2"/>
<protein>
    <recommendedName>
        <fullName evidence="1">UDP-N-acetylglucosamine--N-acetylmuramyl-(pentapeptide) pyrophosphoryl-undecaprenol N-acetylglucosamine transferase</fullName>
        <ecNumber evidence="1">2.4.1.227</ecNumber>
    </recommendedName>
    <alternativeName>
        <fullName evidence="1">Undecaprenyl-PP-MurNAc-pentapeptide-UDPGlcNAc GlcNAc transferase</fullName>
    </alternativeName>
</protein>
<feature type="chain" id="PRO_0000109143" description="UDP-N-acetylglucosamine--N-acetylmuramyl-(pentapeptide) pyrophosphoryl-undecaprenol N-acetylglucosamine transferase">
    <location>
        <begin position="1"/>
        <end position="363"/>
    </location>
</feature>
<feature type="binding site" evidence="1">
    <location>
        <begin position="10"/>
        <end position="12"/>
    </location>
    <ligand>
        <name>UDP-N-acetyl-alpha-D-glucosamine</name>
        <dbReference type="ChEBI" id="CHEBI:57705"/>
    </ligand>
</feature>
<feature type="binding site" evidence="1">
    <location>
        <position position="124"/>
    </location>
    <ligand>
        <name>UDP-N-acetyl-alpha-D-glucosamine</name>
        <dbReference type="ChEBI" id="CHEBI:57705"/>
    </ligand>
</feature>
<feature type="binding site" evidence="1">
    <location>
        <position position="195"/>
    </location>
    <ligand>
        <name>UDP-N-acetyl-alpha-D-glucosamine</name>
        <dbReference type="ChEBI" id="CHEBI:57705"/>
    </ligand>
</feature>
<feature type="binding site" evidence="1">
    <location>
        <position position="295"/>
    </location>
    <ligand>
        <name>UDP-N-acetyl-alpha-D-glucosamine</name>
        <dbReference type="ChEBI" id="CHEBI:57705"/>
    </ligand>
</feature>
<feature type="sequence conflict" description="In Ref. 2; CAA45558." evidence="2" ref="2">
    <original>G</original>
    <variation>K</variation>
    <location>
        <position position="181"/>
    </location>
</feature>
<feature type="sequence conflict" description="In Ref. 2; CAA45558 and 5; AAA83968." evidence="2" ref="2 5">
    <original>T</original>
    <variation>A</variation>
    <location>
        <position position="270"/>
    </location>
</feature>
<organism>
    <name type="scientific">Bacillus subtilis (strain 168)</name>
    <dbReference type="NCBI Taxonomy" id="224308"/>
    <lineage>
        <taxon>Bacteria</taxon>
        <taxon>Bacillati</taxon>
        <taxon>Bacillota</taxon>
        <taxon>Bacilli</taxon>
        <taxon>Bacillales</taxon>
        <taxon>Bacillaceae</taxon>
        <taxon>Bacillus</taxon>
    </lineage>
</organism>